<sequence length="67" mass="7316">MPKMKTKSSAKKRFKITASGKVLAAAAGKRHGMIKRSNKFIRNARGTMVLAEADGKKVIKNYLPNGL</sequence>
<protein>
    <recommendedName>
        <fullName evidence="1">Large ribosomal subunit protein bL35</fullName>
    </recommendedName>
    <alternativeName>
        <fullName evidence="2">50S ribosomal protein L35</fullName>
    </alternativeName>
</protein>
<evidence type="ECO:0000255" key="1">
    <source>
        <dbReference type="HAMAP-Rule" id="MF_00514"/>
    </source>
</evidence>
<evidence type="ECO:0000305" key="2"/>
<organism>
    <name type="scientific">Allorhizobium ampelinum (strain ATCC BAA-846 / DSM 112012 / S4)</name>
    <name type="common">Agrobacterium vitis (strain S4)</name>
    <dbReference type="NCBI Taxonomy" id="311402"/>
    <lineage>
        <taxon>Bacteria</taxon>
        <taxon>Pseudomonadati</taxon>
        <taxon>Pseudomonadota</taxon>
        <taxon>Alphaproteobacteria</taxon>
        <taxon>Hyphomicrobiales</taxon>
        <taxon>Rhizobiaceae</taxon>
        <taxon>Rhizobium/Agrobacterium group</taxon>
        <taxon>Allorhizobium</taxon>
        <taxon>Allorhizobium ampelinum</taxon>
    </lineage>
</organism>
<feature type="chain" id="PRO_1000146113" description="Large ribosomal subunit protein bL35">
    <location>
        <begin position="1"/>
        <end position="67"/>
    </location>
</feature>
<comment type="similarity">
    <text evidence="1">Belongs to the bacterial ribosomal protein bL35 family.</text>
</comment>
<gene>
    <name evidence="1" type="primary">rpmI</name>
    <name type="ordered locus">Avi_0205</name>
</gene>
<reference key="1">
    <citation type="journal article" date="2009" name="J. Bacteriol.">
        <title>Genome sequences of three Agrobacterium biovars help elucidate the evolution of multichromosome genomes in bacteria.</title>
        <authorList>
            <person name="Slater S.C."/>
            <person name="Goldman B.S."/>
            <person name="Goodner B."/>
            <person name="Setubal J.C."/>
            <person name="Farrand S.K."/>
            <person name="Nester E.W."/>
            <person name="Burr T.J."/>
            <person name="Banta L."/>
            <person name="Dickerman A.W."/>
            <person name="Paulsen I."/>
            <person name="Otten L."/>
            <person name="Suen G."/>
            <person name="Welch R."/>
            <person name="Almeida N.F."/>
            <person name="Arnold F."/>
            <person name="Burton O.T."/>
            <person name="Du Z."/>
            <person name="Ewing A."/>
            <person name="Godsy E."/>
            <person name="Heisel S."/>
            <person name="Houmiel K.L."/>
            <person name="Jhaveri J."/>
            <person name="Lu J."/>
            <person name="Miller N.M."/>
            <person name="Norton S."/>
            <person name="Chen Q."/>
            <person name="Phoolcharoen W."/>
            <person name="Ohlin V."/>
            <person name="Ondrusek D."/>
            <person name="Pride N."/>
            <person name="Stricklin S.L."/>
            <person name="Sun J."/>
            <person name="Wheeler C."/>
            <person name="Wilson L."/>
            <person name="Zhu H."/>
            <person name="Wood D.W."/>
        </authorList>
    </citation>
    <scope>NUCLEOTIDE SEQUENCE [LARGE SCALE GENOMIC DNA]</scope>
    <source>
        <strain>ATCC BAA-846 / DSM 112012 / S4</strain>
    </source>
</reference>
<proteinExistence type="inferred from homology"/>
<name>RL35_ALLAM</name>
<keyword id="KW-1185">Reference proteome</keyword>
<keyword id="KW-0687">Ribonucleoprotein</keyword>
<keyword id="KW-0689">Ribosomal protein</keyword>
<dbReference type="EMBL" id="CP000633">
    <property type="protein sequence ID" value="ACM35124.1"/>
    <property type="molecule type" value="Genomic_DNA"/>
</dbReference>
<dbReference type="RefSeq" id="WP_012654654.1">
    <property type="nucleotide sequence ID" value="NC_011989.1"/>
</dbReference>
<dbReference type="SMR" id="B9JYM8"/>
<dbReference type="STRING" id="311402.Avi_0205"/>
<dbReference type="GeneID" id="60681111"/>
<dbReference type="KEGG" id="avi:Avi_0205"/>
<dbReference type="eggNOG" id="COG0291">
    <property type="taxonomic scope" value="Bacteria"/>
</dbReference>
<dbReference type="HOGENOM" id="CLU_169643_2_1_5"/>
<dbReference type="Proteomes" id="UP000001596">
    <property type="component" value="Chromosome 1"/>
</dbReference>
<dbReference type="GO" id="GO:0022625">
    <property type="term" value="C:cytosolic large ribosomal subunit"/>
    <property type="evidence" value="ECO:0007669"/>
    <property type="project" value="TreeGrafter"/>
</dbReference>
<dbReference type="GO" id="GO:0003735">
    <property type="term" value="F:structural constituent of ribosome"/>
    <property type="evidence" value="ECO:0007669"/>
    <property type="project" value="InterPro"/>
</dbReference>
<dbReference type="GO" id="GO:0006412">
    <property type="term" value="P:translation"/>
    <property type="evidence" value="ECO:0007669"/>
    <property type="project" value="UniProtKB-UniRule"/>
</dbReference>
<dbReference type="FunFam" id="4.10.410.60:FF:000001">
    <property type="entry name" value="50S ribosomal protein L35"/>
    <property type="match status" value="1"/>
</dbReference>
<dbReference type="Gene3D" id="4.10.410.60">
    <property type="match status" value="1"/>
</dbReference>
<dbReference type="HAMAP" id="MF_00514">
    <property type="entry name" value="Ribosomal_bL35"/>
    <property type="match status" value="1"/>
</dbReference>
<dbReference type="InterPro" id="IPR001706">
    <property type="entry name" value="Ribosomal_bL35"/>
</dbReference>
<dbReference type="InterPro" id="IPR021137">
    <property type="entry name" value="Ribosomal_bL35-like"/>
</dbReference>
<dbReference type="InterPro" id="IPR018265">
    <property type="entry name" value="Ribosomal_bL35_CS"/>
</dbReference>
<dbReference type="InterPro" id="IPR037229">
    <property type="entry name" value="Ribosomal_bL35_sf"/>
</dbReference>
<dbReference type="NCBIfam" id="TIGR00001">
    <property type="entry name" value="rpmI_bact"/>
    <property type="match status" value="1"/>
</dbReference>
<dbReference type="PANTHER" id="PTHR33343">
    <property type="entry name" value="54S RIBOSOMAL PROTEIN BL35M"/>
    <property type="match status" value="1"/>
</dbReference>
<dbReference type="PANTHER" id="PTHR33343:SF1">
    <property type="entry name" value="LARGE RIBOSOMAL SUBUNIT PROTEIN BL35M"/>
    <property type="match status" value="1"/>
</dbReference>
<dbReference type="Pfam" id="PF01632">
    <property type="entry name" value="Ribosomal_L35p"/>
    <property type="match status" value="1"/>
</dbReference>
<dbReference type="PRINTS" id="PR00064">
    <property type="entry name" value="RIBOSOMALL35"/>
</dbReference>
<dbReference type="SUPFAM" id="SSF143034">
    <property type="entry name" value="L35p-like"/>
    <property type="match status" value="1"/>
</dbReference>
<dbReference type="PROSITE" id="PS00936">
    <property type="entry name" value="RIBOSOMAL_L35"/>
    <property type="match status" value="1"/>
</dbReference>
<accession>B9JYM8</accession>